<organism>
    <name type="scientific">Chlorokybus atmophyticus</name>
    <name type="common">Soil alga</name>
    <dbReference type="NCBI Taxonomy" id="3144"/>
    <lineage>
        <taxon>Eukaryota</taxon>
        <taxon>Viridiplantae</taxon>
        <taxon>Streptophyta</taxon>
        <taxon>Chlorokybophyceae</taxon>
        <taxon>Chlorokybales</taxon>
        <taxon>Chlorokybaceae</taxon>
        <taxon>Chlorokybus</taxon>
    </lineage>
</organism>
<name>CHLL_CHLAT</name>
<keyword id="KW-0004">4Fe-4S</keyword>
<keyword id="KW-0067">ATP-binding</keyword>
<keyword id="KW-0149">Chlorophyll biosynthesis</keyword>
<keyword id="KW-0150">Chloroplast</keyword>
<keyword id="KW-0408">Iron</keyword>
<keyword id="KW-0411">Iron-sulfur</keyword>
<keyword id="KW-0460">Magnesium</keyword>
<keyword id="KW-0479">Metal-binding</keyword>
<keyword id="KW-0547">Nucleotide-binding</keyword>
<keyword id="KW-0560">Oxidoreductase</keyword>
<keyword id="KW-0602">Photosynthesis</keyword>
<keyword id="KW-0934">Plastid</keyword>
<protein>
    <recommendedName>
        <fullName evidence="1">Light-independent protochlorophyllide reductase iron-sulfur ATP-binding protein</fullName>
        <shortName evidence="1">DPOR subunit L</shortName>
        <shortName evidence="1">LI-POR subunit L</shortName>
        <ecNumber evidence="1">1.3.7.7</ecNumber>
    </recommendedName>
</protein>
<feature type="chain" id="PRO_0000324084" description="Light-independent protochlorophyllide reductase iron-sulfur ATP-binding protein">
    <location>
        <begin position="1"/>
        <end position="296"/>
    </location>
</feature>
<feature type="binding site" evidence="1">
    <location>
        <begin position="10"/>
        <end position="15"/>
    </location>
    <ligand>
        <name>ATP</name>
        <dbReference type="ChEBI" id="CHEBI:30616"/>
    </ligand>
</feature>
<feature type="binding site" evidence="1">
    <location>
        <position position="14"/>
    </location>
    <ligand>
        <name>Mg(2+)</name>
        <dbReference type="ChEBI" id="CHEBI:18420"/>
    </ligand>
</feature>
<feature type="binding site" evidence="1">
    <location>
        <position position="39"/>
    </location>
    <ligand>
        <name>ATP</name>
        <dbReference type="ChEBI" id="CHEBI:30616"/>
    </ligand>
</feature>
<feature type="binding site" evidence="1">
    <location>
        <position position="95"/>
    </location>
    <ligand>
        <name>[4Fe-4S] cluster</name>
        <dbReference type="ChEBI" id="CHEBI:49883"/>
        <note>ligand shared between dimeric partners</note>
    </ligand>
</feature>
<feature type="binding site" evidence="1">
    <location>
        <position position="129"/>
    </location>
    <ligand>
        <name>[4Fe-4S] cluster</name>
        <dbReference type="ChEBI" id="CHEBI:49883"/>
        <note>ligand shared between dimeric partners</note>
    </ligand>
</feature>
<feature type="binding site" evidence="1">
    <location>
        <begin position="180"/>
        <end position="181"/>
    </location>
    <ligand>
        <name>ATP</name>
        <dbReference type="ChEBI" id="CHEBI:30616"/>
    </ligand>
</feature>
<evidence type="ECO:0000255" key="1">
    <source>
        <dbReference type="HAMAP-Rule" id="MF_00355"/>
    </source>
</evidence>
<geneLocation type="chloroplast"/>
<accession>Q19V52</accession>
<comment type="function">
    <text evidence="1">Component of the dark-operative protochlorophyllide reductase (DPOR) that uses Mg-ATP and reduced ferredoxin to reduce ring D of protochlorophyllide (Pchlide) to form chlorophyllide a (Chlide). This reaction is light-independent. The L component serves as a unique electron donor to the NB-component of the complex, and binds Mg-ATP.</text>
</comment>
<comment type="catalytic activity">
    <reaction evidence="1">
        <text>chlorophyllide a + oxidized 2[4Fe-4S]-[ferredoxin] + 2 ADP + 2 phosphate = protochlorophyllide a + reduced 2[4Fe-4S]-[ferredoxin] + 2 ATP + 2 H2O</text>
        <dbReference type="Rhea" id="RHEA:28202"/>
        <dbReference type="Rhea" id="RHEA-COMP:10002"/>
        <dbReference type="Rhea" id="RHEA-COMP:10004"/>
        <dbReference type="ChEBI" id="CHEBI:15377"/>
        <dbReference type="ChEBI" id="CHEBI:30616"/>
        <dbReference type="ChEBI" id="CHEBI:33722"/>
        <dbReference type="ChEBI" id="CHEBI:33723"/>
        <dbReference type="ChEBI" id="CHEBI:43474"/>
        <dbReference type="ChEBI" id="CHEBI:83348"/>
        <dbReference type="ChEBI" id="CHEBI:83350"/>
        <dbReference type="ChEBI" id="CHEBI:456216"/>
        <dbReference type="EC" id="1.3.7.7"/>
    </reaction>
</comment>
<comment type="cofactor">
    <cofactor evidence="1">
        <name>[4Fe-4S] cluster</name>
        <dbReference type="ChEBI" id="CHEBI:49883"/>
    </cofactor>
    <text evidence="1">Binds 1 [4Fe-4S] cluster per dimer.</text>
</comment>
<comment type="pathway">
    <text evidence="1">Porphyrin-containing compound metabolism; chlorophyll biosynthesis (light-independent).</text>
</comment>
<comment type="subunit">
    <text evidence="1">Homodimer. Protochlorophyllide reductase is composed of three subunits; ChlL, ChlN and ChlB.</text>
</comment>
<comment type="subcellular location">
    <subcellularLocation>
        <location>Plastid</location>
        <location>Chloroplast</location>
    </subcellularLocation>
</comment>
<comment type="similarity">
    <text evidence="1">Belongs to the NifH/BchL/ChlL family.</text>
</comment>
<dbReference type="EC" id="1.3.7.7" evidence="1"/>
<dbReference type="EMBL" id="DQ422812">
    <property type="protein sequence ID" value="ABD62179.2"/>
    <property type="molecule type" value="Genomic_DNA"/>
</dbReference>
<dbReference type="RefSeq" id="YP_001019173.1">
    <property type="nucleotide sequence ID" value="NC_008822.1"/>
</dbReference>
<dbReference type="SMR" id="Q19V52"/>
<dbReference type="GeneID" id="4783207"/>
<dbReference type="UniPathway" id="UPA00670"/>
<dbReference type="GO" id="GO:0009507">
    <property type="term" value="C:chloroplast"/>
    <property type="evidence" value="ECO:0007669"/>
    <property type="project" value="UniProtKB-SubCell"/>
</dbReference>
<dbReference type="GO" id="GO:0051539">
    <property type="term" value="F:4 iron, 4 sulfur cluster binding"/>
    <property type="evidence" value="ECO:0007669"/>
    <property type="project" value="UniProtKB-UniRule"/>
</dbReference>
<dbReference type="GO" id="GO:0005524">
    <property type="term" value="F:ATP binding"/>
    <property type="evidence" value="ECO:0007669"/>
    <property type="project" value="UniProtKB-UniRule"/>
</dbReference>
<dbReference type="GO" id="GO:0046872">
    <property type="term" value="F:metal ion binding"/>
    <property type="evidence" value="ECO:0007669"/>
    <property type="project" value="UniProtKB-KW"/>
</dbReference>
<dbReference type="GO" id="GO:0016730">
    <property type="term" value="F:oxidoreductase activity, acting on iron-sulfur proteins as donors"/>
    <property type="evidence" value="ECO:0007669"/>
    <property type="project" value="InterPro"/>
</dbReference>
<dbReference type="GO" id="GO:0016636">
    <property type="term" value="F:oxidoreductase activity, acting on the CH-CH group of donors, iron-sulfur protein as acceptor"/>
    <property type="evidence" value="ECO:0007669"/>
    <property type="project" value="UniProtKB-UniRule"/>
</dbReference>
<dbReference type="GO" id="GO:0036068">
    <property type="term" value="P:light-independent chlorophyll biosynthetic process"/>
    <property type="evidence" value="ECO:0007669"/>
    <property type="project" value="UniProtKB-UniRule"/>
</dbReference>
<dbReference type="GO" id="GO:0019685">
    <property type="term" value="P:photosynthesis, dark reaction"/>
    <property type="evidence" value="ECO:0007669"/>
    <property type="project" value="InterPro"/>
</dbReference>
<dbReference type="CDD" id="cd02032">
    <property type="entry name" value="Bchl-like"/>
    <property type="match status" value="1"/>
</dbReference>
<dbReference type="Gene3D" id="3.40.50.300">
    <property type="entry name" value="P-loop containing nucleotide triphosphate hydrolases"/>
    <property type="match status" value="1"/>
</dbReference>
<dbReference type="HAMAP" id="MF_00355">
    <property type="entry name" value="ChlL_BchL"/>
    <property type="match status" value="1"/>
</dbReference>
<dbReference type="InterPro" id="IPR030655">
    <property type="entry name" value="NifH/chlL_CS"/>
</dbReference>
<dbReference type="InterPro" id="IPR000392">
    <property type="entry name" value="NifH/frxC"/>
</dbReference>
<dbReference type="InterPro" id="IPR027417">
    <property type="entry name" value="P-loop_NTPase"/>
</dbReference>
<dbReference type="InterPro" id="IPR005971">
    <property type="entry name" value="Protochlorophyllide_ATP-bd"/>
</dbReference>
<dbReference type="NCBIfam" id="TIGR01281">
    <property type="entry name" value="DPOR_bchL"/>
    <property type="match status" value="1"/>
</dbReference>
<dbReference type="PANTHER" id="PTHR42864">
    <property type="entry name" value="LIGHT-INDEPENDENT PROTOCHLOROPHYLLIDE REDUCTASE IRON-SULFUR ATP-BINDING PROTEIN"/>
    <property type="match status" value="1"/>
</dbReference>
<dbReference type="PANTHER" id="PTHR42864:SF2">
    <property type="entry name" value="LIGHT-INDEPENDENT PROTOCHLOROPHYLLIDE REDUCTASE IRON-SULFUR ATP-BINDING PROTEIN"/>
    <property type="match status" value="1"/>
</dbReference>
<dbReference type="Pfam" id="PF00142">
    <property type="entry name" value="Fer4_NifH"/>
    <property type="match status" value="1"/>
</dbReference>
<dbReference type="PIRSF" id="PIRSF000363">
    <property type="entry name" value="Nitrogenase_iron"/>
    <property type="match status" value="1"/>
</dbReference>
<dbReference type="PRINTS" id="PR00091">
    <property type="entry name" value="NITROGNASEII"/>
</dbReference>
<dbReference type="SUPFAM" id="SSF52540">
    <property type="entry name" value="P-loop containing nucleoside triphosphate hydrolases"/>
    <property type="match status" value="1"/>
</dbReference>
<dbReference type="PROSITE" id="PS00746">
    <property type="entry name" value="NIFH_FRXC_1"/>
    <property type="match status" value="1"/>
</dbReference>
<dbReference type="PROSITE" id="PS00692">
    <property type="entry name" value="NIFH_FRXC_2"/>
    <property type="match status" value="1"/>
</dbReference>
<dbReference type="PROSITE" id="PS51026">
    <property type="entry name" value="NIFH_FRXC_3"/>
    <property type="match status" value="1"/>
</dbReference>
<proteinExistence type="inferred from homology"/>
<gene>
    <name evidence="1" type="primary">chlL</name>
</gene>
<reference key="1">
    <citation type="journal article" date="2007" name="BMC Biol.">
        <title>A clade uniting the green algae Mesostigma viride and Chlorokybus atmophyticus represents the deepest branch of the Streptophyta in chloroplast genome-based phylogenies.</title>
        <authorList>
            <person name="Lemieux C."/>
            <person name="Otis C."/>
            <person name="Turmel M."/>
        </authorList>
    </citation>
    <scope>NUCLEOTIDE SEQUENCE [LARGE SCALE GENOMIC DNA]</scope>
    <source>
        <strain>SAG 48.80</strain>
    </source>
</reference>
<sequence length="296" mass="32402">MKIAVYGKGGIGKSTTSCNISIALARRGKKVLQIGCDPKHDSTFTLTGFLIPTIIDTLQSKDYHYEDVWPEDVIYKGYGGVDCVEAGGPPAGAGCGGYVVGETVKLLKELNAFYEYDVILFDVLGDVVCGGFAAPLNYADYCIIITDNGFDALFAANRIAASVREKARTHPLRLAGLVGNRTSKRDLIDKYVEACPMPVLEVLPLIEDIRISRVKGKTLFEMAESEPSLDYVCEFYLNIADQLLARPEGVVPKEVPDRELFSLLSDFYLNPANNASSIEQPTDSIVQSEQEPFLII</sequence>